<protein>
    <recommendedName>
        <fullName>Movement and silencing protein TGBp1</fullName>
    </recommendedName>
    <alternativeName>
        <fullName>25 kDa protein</fullName>
    </alternativeName>
    <alternativeName>
        <fullName>Silencing suppressor P25</fullName>
    </alternativeName>
    <alternativeName>
        <fullName>Triple gene block 1 protein</fullName>
        <shortName>TGBp1</shortName>
    </alternativeName>
</protein>
<proteinExistence type="inferred from homology"/>
<evidence type="ECO:0000250" key="1"/>
<evidence type="ECO:0000305" key="2"/>
<keyword id="KW-1035">Host cytoplasm</keyword>
<keyword id="KW-0945">Host-virus interaction</keyword>
<keyword id="KW-1090">Inhibition of host innate immune response by virus</keyword>
<keyword id="KW-0694">RNA-binding</keyword>
<keyword id="KW-0941">Suppressor of RNA silencing</keyword>
<keyword id="KW-0813">Transport</keyword>
<keyword id="KW-0899">Viral immunoevasion</keyword>
<keyword id="KW-0916">Viral movement protein</keyword>
<name>TGB1_WCMVO</name>
<sequence length="236" mass="26451">MDHIHHLLSSHGFTRTRLAKSKPIVVHAIAGSGKSTVIRKILSDLPNARAYTLGKPDPYSLSNPTIKAFAQFKRGTLDILDEYGQLPFADLDSSFEFIFTDPYQAPTDNLFEPHYTLEITYRFGPNTCNLLNQAFQSNITSLVTQDNISFGSPYLVDPVGTILAFQPDTYLILCLHQAPFFKVSEVIGYQWPTVTLYLACKISEIPEEERHLLFIGLTRHTESLLILGPDAFDSSP</sequence>
<gene>
    <name type="ORF">ORF2</name>
</gene>
<accession>P15403</accession>
<comment type="function">
    <text evidence="1">Transports viral genome to neighboring plant cells directly through plasmosdesmata, without any budding. The movement protein allows efficient cell to cell propagation, by bypassing the host cell wall barrier. Increases plasmodesma size exclusion limit. Acts as a suppressor of RNA-mediated gene silencing, also known as post-transcriptional gene silencing (PTGS), a mechanism of plant viral defense that limits the accumulation of viral RNAs (By similarity).</text>
</comment>
<comment type="subunit">
    <text evidence="1">Homodimer and homooligomer. Interacts with capsid protein. Interacts with host AGO1; this interaction targets the host protein for degradation, thereby suppressing the antiviral RNA silencing (By similarity).</text>
</comment>
<comment type="subcellular location">
    <subcellularLocation>
        <location evidence="1">Host cytoplasm</location>
    </subcellularLocation>
</comment>
<comment type="miscellaneous">
    <text>TGBp1, TGBp2 and TGBp3 seem to act together for cell-to-cell propagation. TGBp1 is the main movement protein that physically cross the plasmodesma with the viral genome. TGBp2 and TGBp3 would facilitate TGBp1 function.</text>
</comment>
<comment type="similarity">
    <text evidence="2">Belongs to the Tymovirales TGBp1 protein family.</text>
</comment>
<feature type="chain" id="PRO_0000222576" description="Movement and silencing protein TGBp1">
    <location>
        <begin position="1"/>
        <end position="236"/>
    </location>
</feature>
<feature type="domain" description="(+)RNA virus helicase ATP-binding">
    <location>
        <begin position="1"/>
        <end position="117"/>
    </location>
</feature>
<feature type="domain" description="(+)RNA virus helicase C-terminal">
    <location>
        <begin position="118"/>
        <end position="236"/>
    </location>
</feature>
<organism>
    <name type="scientific">White clover mosaic virus (strain O)</name>
    <name type="common">WCMV</name>
    <dbReference type="NCBI Taxonomy" id="12190"/>
    <lineage>
        <taxon>Viruses</taxon>
        <taxon>Riboviria</taxon>
        <taxon>Orthornavirae</taxon>
        <taxon>Kitrinoviricota</taxon>
        <taxon>Alsuviricetes</taxon>
        <taxon>Tymovirales</taxon>
        <taxon>Alphaflexiviridae</taxon>
        <taxon>Potexvirus</taxon>
        <taxon>White clover mosaic virus</taxon>
    </lineage>
</organism>
<dbReference type="EMBL" id="X16636">
    <property type="protein sequence ID" value="CAA34629.1"/>
    <property type="molecule type" value="Genomic_RNA"/>
</dbReference>
<dbReference type="PIR" id="B46350">
    <property type="entry name" value="B46350"/>
</dbReference>
<dbReference type="SMR" id="P15403"/>
<dbReference type="Proteomes" id="UP000007628">
    <property type="component" value="Genome"/>
</dbReference>
<dbReference type="GO" id="GO:0030430">
    <property type="term" value="C:host cell cytoplasm"/>
    <property type="evidence" value="ECO:0007669"/>
    <property type="project" value="UniProtKB-SubCell"/>
</dbReference>
<dbReference type="GO" id="GO:0005524">
    <property type="term" value="F:ATP binding"/>
    <property type="evidence" value="ECO:0007669"/>
    <property type="project" value="InterPro"/>
</dbReference>
<dbReference type="GO" id="GO:0003723">
    <property type="term" value="F:RNA binding"/>
    <property type="evidence" value="ECO:0007669"/>
    <property type="project" value="UniProtKB-KW"/>
</dbReference>
<dbReference type="GO" id="GO:0052170">
    <property type="term" value="P:symbiont-mediated suppression of host innate immune response"/>
    <property type="evidence" value="ECO:0007669"/>
    <property type="project" value="UniProtKB-KW"/>
</dbReference>
<dbReference type="GO" id="GO:0046740">
    <property type="term" value="P:transport of virus in host, cell to cell"/>
    <property type="evidence" value="ECO:0007669"/>
    <property type="project" value="UniProtKB-KW"/>
</dbReference>
<dbReference type="InterPro" id="IPR027351">
    <property type="entry name" value="(+)RNA_virus_helicase_core_dom"/>
</dbReference>
<dbReference type="InterPro" id="IPR027417">
    <property type="entry name" value="P-loop_NTPase"/>
</dbReference>
<dbReference type="Pfam" id="PF01443">
    <property type="entry name" value="Viral_helicase1"/>
    <property type="match status" value="1"/>
</dbReference>
<dbReference type="SUPFAM" id="SSF52540">
    <property type="entry name" value="P-loop containing nucleoside triphosphate hydrolases"/>
    <property type="match status" value="1"/>
</dbReference>
<dbReference type="PROSITE" id="PS51657">
    <property type="entry name" value="PSRV_HELICASE"/>
    <property type="match status" value="1"/>
</dbReference>
<reference key="1">
    <citation type="journal article" date="1990" name="Virology">
        <title>Infectious transcripts and nucleotide sequence of cloned cDNA of the potexvirus white clover mosaic virus.</title>
        <authorList>
            <person name="Beck D.L."/>
            <person name="Forster R.L.S."/>
            <person name="Bevan M.W."/>
            <person name="Boxen K.A."/>
            <person name="Lowe S.C."/>
            <person name="Gardner R.C."/>
        </authorList>
    </citation>
    <scope>NUCLEOTIDE SEQUENCE [GENOMIC RNA]</scope>
</reference>
<reference key="2">
    <citation type="journal article" date="2005" name="Mol. Plant Microbe Interact.">
        <title>A new cell-to-cell transport model for Potexviruses.</title>
        <authorList>
            <person name="Verchot-Lubicz J."/>
        </authorList>
    </citation>
    <scope>REVIEW</scope>
</reference>
<organismHost>
    <name type="scientific">Trifolium</name>
    <dbReference type="NCBI Taxonomy" id="3898"/>
</organismHost>